<protein>
    <recommendedName>
        <fullName evidence="1">Oligoribonuclease</fullName>
        <ecNumber evidence="1">3.1.15.-</ecNumber>
    </recommendedName>
</protein>
<evidence type="ECO:0000255" key="1">
    <source>
        <dbReference type="HAMAP-Rule" id="MF_00045"/>
    </source>
</evidence>
<reference key="1">
    <citation type="journal article" date="2005" name="Proc. Natl. Acad. Sci. U.S.A.">
        <title>Complete genome sequence of Vibrio fischeri: a symbiotic bacterium with pathogenic congeners.</title>
        <authorList>
            <person name="Ruby E.G."/>
            <person name="Urbanowski M."/>
            <person name="Campbell J."/>
            <person name="Dunn A."/>
            <person name="Faini M."/>
            <person name="Gunsalus R."/>
            <person name="Lostroh P."/>
            <person name="Lupp C."/>
            <person name="McCann J."/>
            <person name="Millikan D."/>
            <person name="Schaefer A."/>
            <person name="Stabb E."/>
            <person name="Stevens A."/>
            <person name="Visick K."/>
            <person name="Whistler C."/>
            <person name="Greenberg E.P."/>
        </authorList>
    </citation>
    <scope>NUCLEOTIDE SEQUENCE [LARGE SCALE GENOMIC DNA]</scope>
    <source>
        <strain>ATCC 700601 / ES114</strain>
    </source>
</reference>
<gene>
    <name evidence="1" type="primary">orn</name>
    <name type="ordered locus">VF_2329</name>
</gene>
<accession>Q5E2C2</accession>
<keyword id="KW-0963">Cytoplasm</keyword>
<keyword id="KW-0269">Exonuclease</keyword>
<keyword id="KW-0378">Hydrolase</keyword>
<keyword id="KW-0540">Nuclease</keyword>
<keyword id="KW-1185">Reference proteome</keyword>
<comment type="function">
    <text evidence="1">3'-to-5' exoribonuclease specific for small oligoribonucleotides.</text>
</comment>
<comment type="subcellular location">
    <subcellularLocation>
        <location evidence="1">Cytoplasm</location>
    </subcellularLocation>
</comment>
<comment type="similarity">
    <text evidence="1">Belongs to the oligoribonuclease family.</text>
</comment>
<sequence>MAINDQNLIWVDLEMTGLDPETHKIIEIASIVTDAQLNILAEGPVIAIHQPEEELAKMDNWCTNTHTNSGLVARVQESKYDEEAAIAETIAFLEQWVPKGVSPICGNSIGQDRRFLYKHMPRLEEYFHYRYVDVSTIKELARRWKPEVLDGFTKAGTHLALDDIRESIAELKYYRQHIFTI</sequence>
<name>ORN_ALIF1</name>
<feature type="chain" id="PRO_0000111078" description="Oligoribonuclease">
    <location>
        <begin position="1"/>
        <end position="181"/>
    </location>
</feature>
<feature type="domain" description="Exonuclease" evidence="1">
    <location>
        <begin position="8"/>
        <end position="171"/>
    </location>
</feature>
<feature type="active site" evidence="1">
    <location>
        <position position="129"/>
    </location>
</feature>
<organism>
    <name type="scientific">Aliivibrio fischeri (strain ATCC 700601 / ES114)</name>
    <name type="common">Vibrio fischeri</name>
    <dbReference type="NCBI Taxonomy" id="312309"/>
    <lineage>
        <taxon>Bacteria</taxon>
        <taxon>Pseudomonadati</taxon>
        <taxon>Pseudomonadota</taxon>
        <taxon>Gammaproteobacteria</taxon>
        <taxon>Vibrionales</taxon>
        <taxon>Vibrionaceae</taxon>
        <taxon>Aliivibrio</taxon>
    </lineage>
</organism>
<proteinExistence type="inferred from homology"/>
<dbReference type="EC" id="3.1.15.-" evidence="1"/>
<dbReference type="EMBL" id="CP000020">
    <property type="protein sequence ID" value="AAW86824.1"/>
    <property type="molecule type" value="Genomic_DNA"/>
</dbReference>
<dbReference type="RefSeq" id="WP_011262731.1">
    <property type="nucleotide sequence ID" value="NC_006840.2"/>
</dbReference>
<dbReference type="RefSeq" id="YP_205712.1">
    <property type="nucleotide sequence ID" value="NC_006840.2"/>
</dbReference>
<dbReference type="SMR" id="Q5E2C2"/>
<dbReference type="STRING" id="312309.VF_2329"/>
<dbReference type="EnsemblBacteria" id="AAW86824">
    <property type="protein sequence ID" value="AAW86824"/>
    <property type="gene ID" value="VF_2329"/>
</dbReference>
<dbReference type="GeneID" id="54165052"/>
<dbReference type="KEGG" id="vfi:VF_2329"/>
<dbReference type="PATRIC" id="fig|312309.11.peg.2368"/>
<dbReference type="eggNOG" id="COG1949">
    <property type="taxonomic scope" value="Bacteria"/>
</dbReference>
<dbReference type="HOGENOM" id="CLU_064761_2_0_6"/>
<dbReference type="OrthoDB" id="9801329at2"/>
<dbReference type="Proteomes" id="UP000000537">
    <property type="component" value="Chromosome I"/>
</dbReference>
<dbReference type="GO" id="GO:0005737">
    <property type="term" value="C:cytoplasm"/>
    <property type="evidence" value="ECO:0007669"/>
    <property type="project" value="UniProtKB-SubCell"/>
</dbReference>
<dbReference type="GO" id="GO:0000175">
    <property type="term" value="F:3'-5'-RNA exonuclease activity"/>
    <property type="evidence" value="ECO:0007669"/>
    <property type="project" value="InterPro"/>
</dbReference>
<dbReference type="GO" id="GO:0003676">
    <property type="term" value="F:nucleic acid binding"/>
    <property type="evidence" value="ECO:0007669"/>
    <property type="project" value="InterPro"/>
</dbReference>
<dbReference type="GO" id="GO:0006259">
    <property type="term" value="P:DNA metabolic process"/>
    <property type="evidence" value="ECO:0007669"/>
    <property type="project" value="UniProtKB-ARBA"/>
</dbReference>
<dbReference type="CDD" id="cd06135">
    <property type="entry name" value="Orn"/>
    <property type="match status" value="1"/>
</dbReference>
<dbReference type="FunFam" id="3.30.420.10:FF:000003">
    <property type="entry name" value="Oligoribonuclease"/>
    <property type="match status" value="1"/>
</dbReference>
<dbReference type="Gene3D" id="3.30.420.10">
    <property type="entry name" value="Ribonuclease H-like superfamily/Ribonuclease H"/>
    <property type="match status" value="1"/>
</dbReference>
<dbReference type="HAMAP" id="MF_00045">
    <property type="entry name" value="Oligoribonuclease"/>
    <property type="match status" value="1"/>
</dbReference>
<dbReference type="InterPro" id="IPR013520">
    <property type="entry name" value="Exonuclease_RNaseT/DNA_pol3"/>
</dbReference>
<dbReference type="InterPro" id="IPR022894">
    <property type="entry name" value="Oligoribonuclease"/>
</dbReference>
<dbReference type="InterPro" id="IPR012337">
    <property type="entry name" value="RNaseH-like_sf"/>
</dbReference>
<dbReference type="InterPro" id="IPR036397">
    <property type="entry name" value="RNaseH_sf"/>
</dbReference>
<dbReference type="NCBIfam" id="NF003765">
    <property type="entry name" value="PRK05359.1"/>
    <property type="match status" value="1"/>
</dbReference>
<dbReference type="PANTHER" id="PTHR11046">
    <property type="entry name" value="OLIGORIBONUCLEASE, MITOCHONDRIAL"/>
    <property type="match status" value="1"/>
</dbReference>
<dbReference type="PANTHER" id="PTHR11046:SF0">
    <property type="entry name" value="OLIGORIBONUCLEASE, MITOCHONDRIAL"/>
    <property type="match status" value="1"/>
</dbReference>
<dbReference type="Pfam" id="PF00929">
    <property type="entry name" value="RNase_T"/>
    <property type="match status" value="1"/>
</dbReference>
<dbReference type="SMART" id="SM00479">
    <property type="entry name" value="EXOIII"/>
    <property type="match status" value="1"/>
</dbReference>
<dbReference type="SUPFAM" id="SSF53098">
    <property type="entry name" value="Ribonuclease H-like"/>
    <property type="match status" value="1"/>
</dbReference>